<feature type="chain" id="PRO_1000081150" description="Ion-translocating oxidoreductase complex subunit D">
    <location>
        <begin position="1"/>
        <end position="352"/>
    </location>
</feature>
<feature type="transmembrane region" description="Helical" evidence="1">
    <location>
        <begin position="20"/>
        <end position="40"/>
    </location>
</feature>
<feature type="transmembrane region" description="Helical" evidence="1">
    <location>
        <begin position="44"/>
        <end position="64"/>
    </location>
</feature>
<feature type="transmembrane region" description="Helical" evidence="1">
    <location>
        <begin position="78"/>
        <end position="109"/>
    </location>
</feature>
<feature type="transmembrane region" description="Helical" evidence="1">
    <location>
        <begin position="123"/>
        <end position="143"/>
    </location>
</feature>
<feature type="transmembrane region" description="Helical" evidence="1">
    <location>
        <begin position="214"/>
        <end position="234"/>
    </location>
</feature>
<feature type="transmembrane region" description="Helical" evidence="1">
    <location>
        <begin position="242"/>
        <end position="262"/>
    </location>
</feature>
<feature type="transmembrane region" description="Helical" evidence="1">
    <location>
        <begin position="267"/>
        <end position="287"/>
    </location>
</feature>
<feature type="transmembrane region" description="Helical" evidence="1">
    <location>
        <begin position="301"/>
        <end position="321"/>
    </location>
</feature>
<feature type="transmembrane region" description="Helical" evidence="1">
    <location>
        <begin position="322"/>
        <end position="342"/>
    </location>
</feature>
<feature type="modified residue" description="FMN phosphoryl threonine" evidence="1">
    <location>
        <position position="187"/>
    </location>
</feature>
<sequence>MVFRIASSPYTHNQRQTSRIMLLVLIAALPGVAAQTWFFGWGTLFQIVLAAVTALFAEAIVLSLRKQSIASRLKDYSALLTGLLLAVSIPPLAPWWMIVLGTGFAIIIAKQLYGGLGQNPFNPAMIGYVVLLISFPVQMTSWLPPYEIAATTPDMLDTLRMIFTGHTASGGDLTLLRIGIDGISQATPLDTFKTSLRAGHSVKQIMQYPIYSGVLAGVGWQWVNLAWLVGGVFLLWQKTIRWHIPVSFLVTLALCATLGWLFSPGTLASPQLHLLSGATMLGAFFILTDPVTASTTNRGRLIFGALAGVLVWLIRSFGGYPDGVAFAVLLANITVPLIDYYTRPRVYGHRKG</sequence>
<comment type="function">
    <text evidence="1">Part of a membrane-bound complex that couples electron transfer with translocation of ions across the membrane. Required to maintain the reduced state of SoxR.</text>
</comment>
<comment type="cofactor">
    <cofactor evidence="1">
        <name>FMN</name>
        <dbReference type="ChEBI" id="CHEBI:58210"/>
    </cofactor>
</comment>
<comment type="subunit">
    <text evidence="1">The complex is composed of six subunits: RsxA, RsxB, RsxC, RsxD, RsxE and RsxG.</text>
</comment>
<comment type="subcellular location">
    <subcellularLocation>
        <location evidence="1">Cell inner membrane</location>
        <topology evidence="1">Multi-pass membrane protein</topology>
    </subcellularLocation>
</comment>
<comment type="similarity">
    <text evidence="1">Belongs to the NqrB/RnfD family.</text>
</comment>
<accession>A9MRW9</accession>
<gene>
    <name evidence="1" type="primary">rsxD</name>
    <name type="ordered locus">SARI_01526</name>
</gene>
<reference key="1">
    <citation type="submission" date="2007-11" db="EMBL/GenBank/DDBJ databases">
        <authorList>
            <consortium name="The Salmonella enterica serovar Arizonae Genome Sequencing Project"/>
            <person name="McClelland M."/>
            <person name="Sanderson E.K."/>
            <person name="Porwollik S."/>
            <person name="Spieth J."/>
            <person name="Clifton W.S."/>
            <person name="Fulton R."/>
            <person name="Chunyan W."/>
            <person name="Wollam A."/>
            <person name="Shah N."/>
            <person name="Pepin K."/>
            <person name="Bhonagiri V."/>
            <person name="Nash W."/>
            <person name="Johnson M."/>
            <person name="Thiruvilangam P."/>
            <person name="Wilson R."/>
        </authorList>
    </citation>
    <scope>NUCLEOTIDE SEQUENCE [LARGE SCALE GENOMIC DNA]</scope>
    <source>
        <strain>ATCC BAA-731 / CDC346-86 / RSK2980</strain>
    </source>
</reference>
<evidence type="ECO:0000255" key="1">
    <source>
        <dbReference type="HAMAP-Rule" id="MF_00462"/>
    </source>
</evidence>
<protein>
    <recommendedName>
        <fullName evidence="1">Ion-translocating oxidoreductase complex subunit D</fullName>
        <ecNumber evidence="1">7.-.-.-</ecNumber>
    </recommendedName>
    <alternativeName>
        <fullName evidence="1">Rsx electron transport complex subunit D</fullName>
    </alternativeName>
</protein>
<name>RSXD_SALAR</name>
<organism>
    <name type="scientific">Salmonella arizonae (strain ATCC BAA-731 / CDC346-86 / RSK2980)</name>
    <dbReference type="NCBI Taxonomy" id="41514"/>
    <lineage>
        <taxon>Bacteria</taxon>
        <taxon>Pseudomonadati</taxon>
        <taxon>Pseudomonadota</taxon>
        <taxon>Gammaproteobacteria</taxon>
        <taxon>Enterobacterales</taxon>
        <taxon>Enterobacteriaceae</taxon>
        <taxon>Salmonella</taxon>
    </lineage>
</organism>
<proteinExistence type="inferred from homology"/>
<dbReference type="EC" id="7.-.-.-" evidence="1"/>
<dbReference type="EMBL" id="CP000880">
    <property type="protein sequence ID" value="ABX21422.1"/>
    <property type="molecule type" value="Genomic_DNA"/>
</dbReference>
<dbReference type="SMR" id="A9MRW9"/>
<dbReference type="STRING" id="41514.SARI_01526"/>
<dbReference type="KEGG" id="ses:SARI_01526"/>
<dbReference type="HOGENOM" id="CLU_042020_0_0_6"/>
<dbReference type="Proteomes" id="UP000002084">
    <property type="component" value="Chromosome"/>
</dbReference>
<dbReference type="GO" id="GO:0005886">
    <property type="term" value="C:plasma membrane"/>
    <property type="evidence" value="ECO:0007669"/>
    <property type="project" value="UniProtKB-SubCell"/>
</dbReference>
<dbReference type="GO" id="GO:0022900">
    <property type="term" value="P:electron transport chain"/>
    <property type="evidence" value="ECO:0007669"/>
    <property type="project" value="UniProtKB-UniRule"/>
</dbReference>
<dbReference type="GO" id="GO:0055085">
    <property type="term" value="P:transmembrane transport"/>
    <property type="evidence" value="ECO:0007669"/>
    <property type="project" value="InterPro"/>
</dbReference>
<dbReference type="HAMAP" id="MF_00462">
    <property type="entry name" value="RsxD_RnfD"/>
    <property type="match status" value="1"/>
</dbReference>
<dbReference type="InterPro" id="IPR004338">
    <property type="entry name" value="NqrB/RnfD"/>
</dbReference>
<dbReference type="InterPro" id="IPR011303">
    <property type="entry name" value="RnfD_bac"/>
</dbReference>
<dbReference type="NCBIfam" id="NF002011">
    <property type="entry name" value="PRK00816.1"/>
    <property type="match status" value="1"/>
</dbReference>
<dbReference type="NCBIfam" id="TIGR01946">
    <property type="entry name" value="rnfD"/>
    <property type="match status" value="1"/>
</dbReference>
<dbReference type="PANTHER" id="PTHR30578">
    <property type="entry name" value="ELECTRON TRANSPORT COMPLEX PROTEIN RNFD"/>
    <property type="match status" value="1"/>
</dbReference>
<dbReference type="PANTHER" id="PTHR30578:SF0">
    <property type="entry name" value="ION-TRANSLOCATING OXIDOREDUCTASE COMPLEX SUBUNIT D"/>
    <property type="match status" value="1"/>
</dbReference>
<dbReference type="Pfam" id="PF03116">
    <property type="entry name" value="NQR2_RnfD_RnfE"/>
    <property type="match status" value="1"/>
</dbReference>
<keyword id="KW-0997">Cell inner membrane</keyword>
<keyword id="KW-1003">Cell membrane</keyword>
<keyword id="KW-0249">Electron transport</keyword>
<keyword id="KW-0285">Flavoprotein</keyword>
<keyword id="KW-0288">FMN</keyword>
<keyword id="KW-0472">Membrane</keyword>
<keyword id="KW-0597">Phosphoprotein</keyword>
<keyword id="KW-1185">Reference proteome</keyword>
<keyword id="KW-1278">Translocase</keyword>
<keyword id="KW-0812">Transmembrane</keyword>
<keyword id="KW-1133">Transmembrane helix</keyword>
<keyword id="KW-0813">Transport</keyword>